<accession>B1GZ18</accession>
<name>RNH2_ENDTX</name>
<proteinExistence type="inferred from homology"/>
<dbReference type="EC" id="3.1.26.4" evidence="1"/>
<dbReference type="EMBL" id="AP009510">
    <property type="protein sequence ID" value="BAG13500.1"/>
    <property type="molecule type" value="Genomic_DNA"/>
</dbReference>
<dbReference type="RefSeq" id="WP_015423029.1">
    <property type="nucleotide sequence ID" value="NC_020419.1"/>
</dbReference>
<dbReference type="SMR" id="B1GZ18"/>
<dbReference type="STRING" id="471821.TGRD_017"/>
<dbReference type="KEGG" id="eti:RSTT_016"/>
<dbReference type="KEGG" id="rsd:TGRD_017"/>
<dbReference type="PATRIC" id="fig|471821.5.peg.37"/>
<dbReference type="HOGENOM" id="CLU_036532_3_2_0"/>
<dbReference type="OrthoDB" id="9803420at2"/>
<dbReference type="Proteomes" id="UP000001691">
    <property type="component" value="Chromosome"/>
</dbReference>
<dbReference type="GO" id="GO:0005737">
    <property type="term" value="C:cytoplasm"/>
    <property type="evidence" value="ECO:0007669"/>
    <property type="project" value="UniProtKB-SubCell"/>
</dbReference>
<dbReference type="GO" id="GO:0032299">
    <property type="term" value="C:ribonuclease H2 complex"/>
    <property type="evidence" value="ECO:0007669"/>
    <property type="project" value="TreeGrafter"/>
</dbReference>
<dbReference type="GO" id="GO:0030145">
    <property type="term" value="F:manganese ion binding"/>
    <property type="evidence" value="ECO:0007669"/>
    <property type="project" value="UniProtKB-UniRule"/>
</dbReference>
<dbReference type="GO" id="GO:0003723">
    <property type="term" value="F:RNA binding"/>
    <property type="evidence" value="ECO:0007669"/>
    <property type="project" value="InterPro"/>
</dbReference>
<dbReference type="GO" id="GO:0004523">
    <property type="term" value="F:RNA-DNA hybrid ribonuclease activity"/>
    <property type="evidence" value="ECO:0007669"/>
    <property type="project" value="UniProtKB-UniRule"/>
</dbReference>
<dbReference type="GO" id="GO:0043137">
    <property type="term" value="P:DNA replication, removal of RNA primer"/>
    <property type="evidence" value="ECO:0007669"/>
    <property type="project" value="TreeGrafter"/>
</dbReference>
<dbReference type="GO" id="GO:0006298">
    <property type="term" value="P:mismatch repair"/>
    <property type="evidence" value="ECO:0007669"/>
    <property type="project" value="TreeGrafter"/>
</dbReference>
<dbReference type="CDD" id="cd07182">
    <property type="entry name" value="RNase_HII_bacteria_HII_like"/>
    <property type="match status" value="1"/>
</dbReference>
<dbReference type="FunFam" id="3.30.420.10:FF:000006">
    <property type="entry name" value="Ribonuclease HII"/>
    <property type="match status" value="1"/>
</dbReference>
<dbReference type="Gene3D" id="3.30.420.10">
    <property type="entry name" value="Ribonuclease H-like superfamily/Ribonuclease H"/>
    <property type="match status" value="1"/>
</dbReference>
<dbReference type="HAMAP" id="MF_00052_B">
    <property type="entry name" value="RNase_HII_B"/>
    <property type="match status" value="1"/>
</dbReference>
<dbReference type="InterPro" id="IPR022898">
    <property type="entry name" value="RNase_HII"/>
</dbReference>
<dbReference type="InterPro" id="IPR001352">
    <property type="entry name" value="RNase_HII/HIII"/>
</dbReference>
<dbReference type="InterPro" id="IPR024567">
    <property type="entry name" value="RNase_HII/HIII_dom"/>
</dbReference>
<dbReference type="InterPro" id="IPR012337">
    <property type="entry name" value="RNaseH-like_sf"/>
</dbReference>
<dbReference type="InterPro" id="IPR036397">
    <property type="entry name" value="RNaseH_sf"/>
</dbReference>
<dbReference type="NCBIfam" id="NF000594">
    <property type="entry name" value="PRK00015.1-1"/>
    <property type="match status" value="1"/>
</dbReference>
<dbReference type="NCBIfam" id="NF000595">
    <property type="entry name" value="PRK00015.1-3"/>
    <property type="match status" value="1"/>
</dbReference>
<dbReference type="PANTHER" id="PTHR10954">
    <property type="entry name" value="RIBONUCLEASE H2 SUBUNIT A"/>
    <property type="match status" value="1"/>
</dbReference>
<dbReference type="PANTHER" id="PTHR10954:SF18">
    <property type="entry name" value="RIBONUCLEASE HII"/>
    <property type="match status" value="1"/>
</dbReference>
<dbReference type="Pfam" id="PF01351">
    <property type="entry name" value="RNase_HII"/>
    <property type="match status" value="1"/>
</dbReference>
<dbReference type="SUPFAM" id="SSF53098">
    <property type="entry name" value="Ribonuclease H-like"/>
    <property type="match status" value="1"/>
</dbReference>
<dbReference type="PROSITE" id="PS51975">
    <property type="entry name" value="RNASE_H_2"/>
    <property type="match status" value="1"/>
</dbReference>
<evidence type="ECO:0000255" key="1">
    <source>
        <dbReference type="HAMAP-Rule" id="MF_00052"/>
    </source>
</evidence>
<evidence type="ECO:0000255" key="2">
    <source>
        <dbReference type="PROSITE-ProRule" id="PRU01319"/>
    </source>
</evidence>
<comment type="function">
    <text evidence="1">Endonuclease that specifically degrades the RNA of RNA-DNA hybrids.</text>
</comment>
<comment type="catalytic activity">
    <reaction evidence="1">
        <text>Endonucleolytic cleavage to 5'-phosphomonoester.</text>
        <dbReference type="EC" id="3.1.26.4"/>
    </reaction>
</comment>
<comment type="cofactor">
    <cofactor evidence="1">
        <name>Mn(2+)</name>
        <dbReference type="ChEBI" id="CHEBI:29035"/>
    </cofactor>
    <cofactor evidence="1">
        <name>Mg(2+)</name>
        <dbReference type="ChEBI" id="CHEBI:18420"/>
    </cofactor>
    <text evidence="1">Manganese or magnesium. Binds 1 divalent metal ion per monomer in the absence of substrate. May bind a second metal ion after substrate binding.</text>
</comment>
<comment type="subcellular location">
    <subcellularLocation>
        <location evidence="1">Cytoplasm</location>
    </subcellularLocation>
</comment>
<comment type="similarity">
    <text evidence="1">Belongs to the RNase HII family.</text>
</comment>
<sequence length="210" mass="23477">MFSNIFSFDRNFYNKGFYPVAGIDEAGRGPLAGPVVAAVVILPKDSAIPYLNDSKQLSEKKREILFEIIKETALDYAVELVNNEIIDEINILQATFLAMSRAVLKLKTQPDLYLIDGNRKVHGLSFNQETIVGGDAKSACIAAASILAKVSRDKMMLEYAKQYPVYEFEKHKGYGTKKHIEALKKHGICPIHRLTFSPVNDIISQTKLNI</sequence>
<reference key="1">
    <citation type="journal article" date="2008" name="Proc. Natl. Acad. Sci. U.S.A.">
        <title>Complete genome of the uncultured termite group 1 bacteria in a single host protist cell.</title>
        <authorList>
            <person name="Hongoh Y."/>
            <person name="Sharma V.K."/>
            <person name="Prakash T."/>
            <person name="Noda S."/>
            <person name="Taylor T.D."/>
            <person name="Kudo T."/>
            <person name="Sakaki Y."/>
            <person name="Toyoda A."/>
            <person name="Hattori M."/>
            <person name="Ohkuma M."/>
        </authorList>
    </citation>
    <scope>NUCLEOTIDE SEQUENCE [LARGE SCALE GENOMIC DNA]</scope>
</reference>
<organism>
    <name type="scientific">Endomicrobium trichonymphae</name>
    <dbReference type="NCBI Taxonomy" id="1408204"/>
    <lineage>
        <taxon>Bacteria</taxon>
        <taxon>Pseudomonadati</taxon>
        <taxon>Elusimicrobiota</taxon>
        <taxon>Endomicrobiia</taxon>
        <taxon>Endomicrobiales</taxon>
        <taxon>Endomicrobiaceae</taxon>
        <taxon>Candidatus Endomicrobiellum</taxon>
    </lineage>
</organism>
<protein>
    <recommendedName>
        <fullName evidence="1">Ribonuclease HII</fullName>
        <shortName evidence="1">RNase HII</shortName>
        <ecNumber evidence="1">3.1.26.4</ecNumber>
    </recommendedName>
</protein>
<feature type="chain" id="PRO_1000117694" description="Ribonuclease HII">
    <location>
        <begin position="1"/>
        <end position="210"/>
    </location>
</feature>
<feature type="domain" description="RNase H type-2" evidence="2">
    <location>
        <begin position="18"/>
        <end position="208"/>
    </location>
</feature>
<feature type="binding site" evidence="1">
    <location>
        <position position="24"/>
    </location>
    <ligand>
        <name>a divalent metal cation</name>
        <dbReference type="ChEBI" id="CHEBI:60240"/>
    </ligand>
</feature>
<feature type="binding site" evidence="1">
    <location>
        <position position="25"/>
    </location>
    <ligand>
        <name>a divalent metal cation</name>
        <dbReference type="ChEBI" id="CHEBI:60240"/>
    </ligand>
</feature>
<feature type="binding site" evidence="1">
    <location>
        <position position="116"/>
    </location>
    <ligand>
        <name>a divalent metal cation</name>
        <dbReference type="ChEBI" id="CHEBI:60240"/>
    </ligand>
</feature>
<keyword id="KW-0963">Cytoplasm</keyword>
<keyword id="KW-0255">Endonuclease</keyword>
<keyword id="KW-0378">Hydrolase</keyword>
<keyword id="KW-0464">Manganese</keyword>
<keyword id="KW-0479">Metal-binding</keyword>
<keyword id="KW-0540">Nuclease</keyword>
<gene>
    <name evidence="1" type="primary">rnhB</name>
    <name type="ordered locus">TGRD_017</name>
</gene>